<comment type="catalytic activity">
    <reaction evidence="1">
        <text>tRNA(Gly) + glycine + ATP = glycyl-tRNA(Gly) + AMP + diphosphate</text>
        <dbReference type="Rhea" id="RHEA:16013"/>
        <dbReference type="Rhea" id="RHEA-COMP:9664"/>
        <dbReference type="Rhea" id="RHEA-COMP:9683"/>
        <dbReference type="ChEBI" id="CHEBI:30616"/>
        <dbReference type="ChEBI" id="CHEBI:33019"/>
        <dbReference type="ChEBI" id="CHEBI:57305"/>
        <dbReference type="ChEBI" id="CHEBI:78442"/>
        <dbReference type="ChEBI" id="CHEBI:78522"/>
        <dbReference type="ChEBI" id="CHEBI:456215"/>
        <dbReference type="EC" id="6.1.1.14"/>
    </reaction>
</comment>
<comment type="subunit">
    <text evidence="1">Tetramer of two alpha and two beta subunits.</text>
</comment>
<comment type="subcellular location">
    <subcellularLocation>
        <location evidence="1">Cytoplasm</location>
    </subcellularLocation>
</comment>
<comment type="similarity">
    <text evidence="1">Belongs to the class-II aminoacyl-tRNA synthetase family.</text>
</comment>
<keyword id="KW-0030">Aminoacyl-tRNA synthetase</keyword>
<keyword id="KW-0067">ATP-binding</keyword>
<keyword id="KW-0963">Cytoplasm</keyword>
<keyword id="KW-0436">Ligase</keyword>
<keyword id="KW-0547">Nucleotide-binding</keyword>
<keyword id="KW-0648">Protein biosynthesis</keyword>
<proteinExistence type="inferred from homology"/>
<protein>
    <recommendedName>
        <fullName evidence="1">Glycine--tRNA ligase beta subunit</fullName>
        <ecNumber evidence="1">6.1.1.14</ecNumber>
    </recommendedName>
    <alternativeName>
        <fullName evidence="1">Glycyl-tRNA synthetase beta subunit</fullName>
        <shortName evidence="1">GlyRS</shortName>
    </alternativeName>
</protein>
<gene>
    <name evidence="1" type="primary">glyS</name>
    <name type="ordered locus">SPT_0801</name>
</gene>
<organism>
    <name type="scientific">Streptococcus pneumoniae (strain Taiwan19F-14)</name>
    <dbReference type="NCBI Taxonomy" id="487213"/>
    <lineage>
        <taxon>Bacteria</taxon>
        <taxon>Bacillati</taxon>
        <taxon>Bacillota</taxon>
        <taxon>Bacilli</taxon>
        <taxon>Lactobacillales</taxon>
        <taxon>Streptococcaceae</taxon>
        <taxon>Streptococcus</taxon>
    </lineage>
</organism>
<name>SYGB_STRZT</name>
<evidence type="ECO:0000255" key="1">
    <source>
        <dbReference type="HAMAP-Rule" id="MF_00255"/>
    </source>
</evidence>
<accession>C1CQP4</accession>
<reference key="1">
    <citation type="journal article" date="2010" name="Genome Biol.">
        <title>Structure and dynamics of the pan-genome of Streptococcus pneumoniae and closely related species.</title>
        <authorList>
            <person name="Donati C."/>
            <person name="Hiller N.L."/>
            <person name="Tettelin H."/>
            <person name="Muzzi A."/>
            <person name="Croucher N.J."/>
            <person name="Angiuoli S.V."/>
            <person name="Oggioni M."/>
            <person name="Dunning Hotopp J.C."/>
            <person name="Hu F.Z."/>
            <person name="Riley D.R."/>
            <person name="Covacci A."/>
            <person name="Mitchell T.J."/>
            <person name="Bentley S.D."/>
            <person name="Kilian M."/>
            <person name="Ehrlich G.D."/>
            <person name="Rappuoli R."/>
            <person name="Moxon E.R."/>
            <person name="Masignani V."/>
        </authorList>
    </citation>
    <scope>NUCLEOTIDE SEQUENCE [LARGE SCALE GENOMIC DNA]</scope>
    <source>
        <strain>Taiwan19F-14</strain>
    </source>
</reference>
<dbReference type="EC" id="6.1.1.14" evidence="1"/>
<dbReference type="EMBL" id="CP000921">
    <property type="protein sequence ID" value="ACO23899.1"/>
    <property type="molecule type" value="Genomic_DNA"/>
</dbReference>
<dbReference type="RefSeq" id="WP_000164766.1">
    <property type="nucleotide sequence ID" value="NC_012469.1"/>
</dbReference>
<dbReference type="SMR" id="C1CQP4"/>
<dbReference type="KEGG" id="snt:SPT_0801"/>
<dbReference type="HOGENOM" id="CLU_007220_2_2_9"/>
<dbReference type="GO" id="GO:0005829">
    <property type="term" value="C:cytosol"/>
    <property type="evidence" value="ECO:0007669"/>
    <property type="project" value="TreeGrafter"/>
</dbReference>
<dbReference type="GO" id="GO:0004814">
    <property type="term" value="F:arginine-tRNA ligase activity"/>
    <property type="evidence" value="ECO:0007669"/>
    <property type="project" value="InterPro"/>
</dbReference>
<dbReference type="GO" id="GO:0005524">
    <property type="term" value="F:ATP binding"/>
    <property type="evidence" value="ECO:0007669"/>
    <property type="project" value="UniProtKB-UniRule"/>
</dbReference>
<dbReference type="GO" id="GO:0004820">
    <property type="term" value="F:glycine-tRNA ligase activity"/>
    <property type="evidence" value="ECO:0007669"/>
    <property type="project" value="UniProtKB-UniRule"/>
</dbReference>
<dbReference type="GO" id="GO:0006420">
    <property type="term" value="P:arginyl-tRNA aminoacylation"/>
    <property type="evidence" value="ECO:0007669"/>
    <property type="project" value="InterPro"/>
</dbReference>
<dbReference type="GO" id="GO:0006426">
    <property type="term" value="P:glycyl-tRNA aminoacylation"/>
    <property type="evidence" value="ECO:0007669"/>
    <property type="project" value="UniProtKB-UniRule"/>
</dbReference>
<dbReference type="HAMAP" id="MF_00255">
    <property type="entry name" value="Gly_tRNA_synth_beta"/>
    <property type="match status" value="1"/>
</dbReference>
<dbReference type="InterPro" id="IPR008909">
    <property type="entry name" value="DALR_anticod-bd"/>
</dbReference>
<dbReference type="InterPro" id="IPR015944">
    <property type="entry name" value="Gly-tRNA-synth_bsu"/>
</dbReference>
<dbReference type="InterPro" id="IPR006194">
    <property type="entry name" value="Gly-tRNA-synth_heterodimer"/>
</dbReference>
<dbReference type="NCBIfam" id="TIGR00211">
    <property type="entry name" value="glyS"/>
    <property type="match status" value="1"/>
</dbReference>
<dbReference type="PANTHER" id="PTHR30075:SF2">
    <property type="entry name" value="GLYCINE--TRNA LIGASE, CHLOROPLASTIC_MITOCHONDRIAL 2"/>
    <property type="match status" value="1"/>
</dbReference>
<dbReference type="PANTHER" id="PTHR30075">
    <property type="entry name" value="GLYCYL-TRNA SYNTHETASE"/>
    <property type="match status" value="1"/>
</dbReference>
<dbReference type="Pfam" id="PF05746">
    <property type="entry name" value="DALR_1"/>
    <property type="match status" value="1"/>
</dbReference>
<dbReference type="Pfam" id="PF02092">
    <property type="entry name" value="tRNA_synt_2f"/>
    <property type="match status" value="1"/>
</dbReference>
<dbReference type="PRINTS" id="PR01045">
    <property type="entry name" value="TRNASYNTHGB"/>
</dbReference>
<dbReference type="SUPFAM" id="SSF109604">
    <property type="entry name" value="HD-domain/PDEase-like"/>
    <property type="match status" value="1"/>
</dbReference>
<dbReference type="PROSITE" id="PS50861">
    <property type="entry name" value="AA_TRNA_LIGASE_II_GLYAB"/>
    <property type="match status" value="1"/>
</dbReference>
<feature type="chain" id="PRO_1000197222" description="Glycine--tRNA ligase beta subunit">
    <location>
        <begin position="1"/>
        <end position="678"/>
    </location>
</feature>
<sequence>MTKNLLVELGLEELPAYVVTPSEKQLGEKMAAFLKENRLSFEAIQTFSTPRRLAVRVTGLSDKQSDLTEDFKGPAKKIALDSDGNFTKAAQGFVRGKGLTVEDIEFREIKGEEYVYVTKEEVGQSVEAIVPGVVDVLKSLTFPVSMHWAGNSFEYIRPVHTLTVLLDEQEFDLDFLDIKGSRVSRGHRFLGKETKIQSALSYEEDLRKQFVIADPCEREQMIVDQIKEIEAKHGVHIEIDADLLNEVLNLVEYPTAFMGSFDAKYLEVPEEVLVTSMKEHQRYFVVRDQDGKLLPNFISVRNGNAERLKNVIKGNEKVLVARLEDGEFFWREDQKLVISDLVEKLNNVTFHEKIGSLREHMIRTGQITVLLAEKAGLSVDETVDLARAAAIYKFDLLTGMVGEFDELQGIMGEKYTLLAGETPAVAAAIREHYMPTSAEGELPESKVGAVLAIADKLDTILSFFSVGLIPSGSNDPYALRRATQGVVRILDAFGWHIAMDELIDSLYALKFDSLTYENKAEVMDFIKARVDKMMGSTPKDIKEAVLAGSNFVVADMLEAASALVEVSKEEDFKPSVESLSRAFNLAEKAEGVATVDSALFENDQEKALAEAVETLVLSGPASQQLKQLFALSPVIDAFFENTMVMAEDQAVRQNRLAILSQLTKKAAKFACFNQINTK</sequence>